<gene>
    <name type="primary">ANLN</name>
</gene>
<keyword id="KW-0002">3D-structure</keyword>
<keyword id="KW-0007">Acetylation</keyword>
<keyword id="KW-0009">Actin-binding</keyword>
<keyword id="KW-0025">Alternative splicing</keyword>
<keyword id="KW-0131">Cell cycle</keyword>
<keyword id="KW-0132">Cell division</keyword>
<keyword id="KW-0966">Cell projection</keyword>
<keyword id="KW-0175">Coiled coil</keyword>
<keyword id="KW-0963">Cytoplasm</keyword>
<keyword id="KW-0206">Cytoskeleton</keyword>
<keyword id="KW-0225">Disease variant</keyword>
<keyword id="KW-1017">Isopeptide bond</keyword>
<keyword id="KW-0498">Mitosis</keyword>
<keyword id="KW-0539">Nucleus</keyword>
<keyword id="KW-0597">Phosphoprotein</keyword>
<keyword id="KW-1267">Proteomics identification</keyword>
<keyword id="KW-1185">Reference proteome</keyword>
<keyword id="KW-0832">Ubl conjugation</keyword>
<sequence>MDPFTEKLLERTRARRENLQRKMAERPTAAPRSMTHAKRARQPLSEASNQQPLSGGEEKSCTKPSPSKKRCSDNTEVEVSNLENKQPVESTSAKSCSPSPVSPQVQPQAADTISDSVAVPASLLGMRRGLNSRLEATAASSVKTRMQKLAEQRRRWDNDDMTDDIPESSLFSPMPSEEKAASPPRPLLSNASATPVGRRGRLANLAATICSWEDDVNHSFAKQNSVQEQPGTACLSKFSSASGASARINSSSVKQEATFCSQRDGDASLNKALSSSADDASLVNASISSSVKATSPVKSTTSITDAKSCEGQNPELLPKTPISPLKTGVSKPIVKSTLSQTVPSKGELSREICLQSQSKDKSTTPGGTGIKPFLERFGERCQEHSKESPARSTPHRTPIITPNTKAIQERLFKQDTSSSTTHLAQQLKQERQKELACLRGRFDKGNIWSAEKGGNSKSKQLETKQETHCQSTPLKKHQGVSKTQSLPVTEKVTENQIPAKNSSTEPKGFTECEMTKSSPLKITLFLEEDKSLKVTSDPKVEQKIEVIREIEMSVDDDDINSSKVINDLFSDVLEEGELDMEKSQEEMDQALAESSEEQEDALNISSMSLLAPLAQTVGVVSPESLVSTPRLELKDTSRSDESPKPGKFQRTRVPRAESGDSLGSEDRDLLYSIDAYRSQRFKETERPSIKQVIVRKEDVTSKLDEKNNAFPCQVNIKQKMQELNNEINMQQTVIYQASQALNCCVDEEHGKGSLEEAEAERLLLIATGKRTLLIDELNKLKNEGPQRKNKASPQSEFMPSKGSVTLSEIRLPLKADFVCSTVQKPDAANYYYLIILKAGAENMVATPLASTSNSLNGDALTFTTTFTLQDVSNDFEINIEVYSLVQKKDPSGLDKKKKTSKSKAITPKRLLTSITTKSNIHSSVMASPGGLSAVRTSNFALVGSYTLSLSSVGNTKFVLDKVPFLSSLEGHIYLKIKCQVNSSVEERGFLTIFEDVSGFGAWHRRWCVLSGNCISYWTYPDDEKRKNPIGRINLANCTSRQIEPANREFCARRNTFELITVRPQREDDRETLVSQCRDTLCVTKNWLSADTKEERDLWMQKLNQVLVDIRLWQPDACYKPIGKP</sequence>
<evidence type="ECO:0000250" key="1">
    <source>
        <dbReference type="UniProtKB" id="Q8K298"/>
    </source>
</evidence>
<evidence type="ECO:0000255" key="2"/>
<evidence type="ECO:0000255" key="3">
    <source>
        <dbReference type="PROSITE-ProRule" id="PRU00145"/>
    </source>
</evidence>
<evidence type="ECO:0000256" key="4">
    <source>
        <dbReference type="SAM" id="MobiDB-lite"/>
    </source>
</evidence>
<evidence type="ECO:0000269" key="5">
    <source>
    </source>
</evidence>
<evidence type="ECO:0000269" key="6">
    <source>
    </source>
</evidence>
<evidence type="ECO:0000269" key="7">
    <source>
    </source>
</evidence>
<evidence type="ECO:0000269" key="8">
    <source>
    </source>
</evidence>
<evidence type="ECO:0000269" key="9">
    <source>
    </source>
</evidence>
<evidence type="ECO:0000269" key="10">
    <source>
    </source>
</evidence>
<evidence type="ECO:0000269" key="11">
    <source>
    </source>
</evidence>
<evidence type="ECO:0000269" key="12">
    <source>
    </source>
</evidence>
<evidence type="ECO:0000269" key="13">
    <source>
    </source>
</evidence>
<evidence type="ECO:0000303" key="14">
    <source>
    </source>
</evidence>
<evidence type="ECO:0000303" key="15">
    <source>
    </source>
</evidence>
<evidence type="ECO:0000305" key="16"/>
<evidence type="ECO:0007744" key="17">
    <source>
    </source>
</evidence>
<evidence type="ECO:0007744" key="18">
    <source>
    </source>
</evidence>
<evidence type="ECO:0007744" key="19">
    <source>
    </source>
</evidence>
<evidence type="ECO:0007744" key="20">
    <source>
    </source>
</evidence>
<evidence type="ECO:0007744" key="21">
    <source>
    </source>
</evidence>
<evidence type="ECO:0007744" key="22">
    <source>
    </source>
</evidence>
<evidence type="ECO:0007744" key="23">
    <source>
    </source>
</evidence>
<evidence type="ECO:0007744" key="24">
    <source>
    </source>
</evidence>
<evidence type="ECO:0007744" key="25">
    <source>
    </source>
</evidence>
<evidence type="ECO:0007744" key="26">
    <source>
    </source>
</evidence>
<evidence type="ECO:0007744" key="27">
    <source>
    </source>
</evidence>
<evidence type="ECO:0007829" key="28">
    <source>
        <dbReference type="PDB" id="2Y7B"/>
    </source>
</evidence>
<evidence type="ECO:0007829" key="29">
    <source>
        <dbReference type="PDB" id="4XOI"/>
    </source>
</evidence>
<name>ANLN_HUMAN</name>
<comment type="function">
    <text evidence="5 6 7 9 11 12 13">Required for cytokinesis (PubMed:16040610). Essential for the structural integrity of the cleavage furrow and for completion of cleavage furrow ingression. Plays a role in bleb assembly during metaphase and anaphase of mitosis (PubMed:23870127). May play a significant role in podocyte cell migration (PubMed:24676636).</text>
</comment>
<comment type="subunit">
    <text evidence="5 8 9 11">Interacts with F-actin (PubMed:10931866). Interacts with CD2AP (PubMed:15800069). May interact with RHOA (PubMed:16357138). Interacts with FZR1/CDH1 during mitotic exit (PubMed:16040610).</text>
</comment>
<comment type="interaction">
    <interactant intactId="EBI-10312488">
        <id>Q9NQW6-2</id>
    </interactant>
    <interactant intactId="EBI-2341554">
        <id>Q8NA82</id>
        <label>MARCHF10</label>
    </interactant>
    <organismsDiffer>false</organismsDiffer>
    <experiments>3</experiments>
</comment>
<comment type="subcellular location">
    <subcellularLocation>
        <location>Nucleus</location>
    </subcellularLocation>
    <subcellularLocation>
        <location>Cytoplasm</location>
        <location>Cytoskeleton</location>
    </subcellularLocation>
    <subcellularLocation>
        <location evidence="12">Cytoplasm</location>
        <location evidence="12">Cell cortex</location>
    </subcellularLocation>
    <subcellularLocation>
        <location evidence="12">Cell projection</location>
        <location evidence="12">Bleb</location>
    </subcellularLocation>
    <text>Mainly found in the nucleus during interphase. Colocalizes with cortical F-actin upon nuclear envelope breakdown in mitosis and subsequently concentrates in the area of the prospective contractile ring in anaphase. This pattern persists until telophase, when the protein becomes concentrated in the midbody.</text>
</comment>
<comment type="alternative products">
    <event type="alternative splicing"/>
    <isoform>
        <id>Q9NQW6-1</id>
        <name>1</name>
        <sequence type="displayed"/>
    </isoform>
    <isoform>
        <id>Q9NQW6-2</id>
        <name>2</name>
        <sequence type="described" ref="VSP_017617"/>
    </isoform>
</comment>
<comment type="tissue specificity">
    <text evidence="10 13">Ubiquitously expressed. Present at highest levels in the brain, at high levels in the placenta and testis, at intermediate levels in the intestine, ovary, skeletal muscle and thymus and at lower levels in heart, kidney, liver, lung, pancreas, prostate and spleen. In the kidney, it is widely expressed in tubules, but sparsely expressed in the glomerulus (PubMed:24676636). Expression is significantly increased in renal biopsy specimens from idiopathic FSGS (PubMed:24676636). Overexpressed in many tumor types including breast, colorectal, endometrial, hepatic, kidney, lung, ovarian and pancreatic tumors.</text>
</comment>
<comment type="developmental stage">
    <text evidence="8 9 10 11">Expressed in fetal brain, heart, kidney, liver, lung, skeletal muscle, spleen and thymus. In dividing cells expression increases during S and G2 phases, peaks at mitosis and subsequently drops as cells enter G1 phase.</text>
</comment>
<comment type="PTM">
    <text evidence="8 11">Phosphorylated during mitosis.</text>
</comment>
<comment type="PTM">
    <text evidence="9">Ubiquitinated, and this requires FZR1/CDH1.</text>
</comment>
<comment type="disease" evidence="13">
    <disease id="DI-04233">
        <name>Focal segmental glomerulosclerosis 8</name>
        <acronym>FSGS8</acronym>
        <description>A renal pathology defined by the presence of segmental sclerosis in glomeruli and resulting in proteinuria, reduced glomerular filtration rate and progressive decline in renal function. Renal insufficiency often progresses to end-stage renal disease, a highly morbid state requiring either dialysis therapy or kidney transplantation.</description>
        <dbReference type="MIM" id="616032"/>
    </disease>
    <text>The disease is caused by variants affecting the gene represented in this entry.</text>
</comment>
<comment type="sequence caution" evidence="16">
    <conflict type="erroneous initiation">
        <sequence resource="EMBL-CDS" id="AAH34692"/>
    </conflict>
</comment>
<comment type="sequence caution" evidence="16">
    <conflict type="erroneous initiation">
        <sequence resource="EMBL-CDS" id="BAA91710"/>
    </conflict>
</comment>
<comment type="sequence caution" evidence="16">
    <conflict type="erroneous initiation">
        <sequence resource="EMBL-CDS" id="BAA91711"/>
    </conflict>
</comment>
<comment type="online information" name="Atlas of Genetics and Cytogenetics in Oncology and Haematology">
    <link uri="https://atlasgeneticsoncology.org/gene/44318/ANLN"/>
</comment>
<accession>Q9NQW6</accession>
<accession>Q5CZ78</accession>
<accession>Q6NSK5</accession>
<accession>Q9H8Y4</accession>
<accession>Q9NVN9</accession>
<accession>Q9NVP0</accession>
<reference key="1">
    <citation type="journal article" date="2000" name="J. Cell Biol.">
        <title>Functional analysis of a human homolog of the Drosophila actin binding protein anillin suggests a role in cytokinesis.</title>
        <authorList>
            <person name="Oegema K."/>
            <person name="Savoian M.S."/>
            <person name="Mitchison T.J."/>
            <person name="Field C.M."/>
        </authorList>
    </citation>
    <scope>NUCLEOTIDE SEQUENCE [MRNA] (ISOFORM 1)</scope>
    <scope>VARIANT LYS-185</scope>
    <scope>FUNCTION</scope>
    <scope>INTERACTION WITH ACTIN</scope>
    <scope>SUBCELLULAR LOCATION</scope>
</reference>
<reference key="2">
    <citation type="journal article" date="2004" name="Genome Res.">
        <title>The status, quality, and expansion of the NIH full-length cDNA project: the Mammalian Gene Collection (MGC).</title>
        <authorList>
            <consortium name="The MGC Project Team"/>
        </authorList>
    </citation>
    <scope>NUCLEOTIDE SEQUENCE [LARGE SCALE MRNA] (ISOFORM 2)</scope>
    <scope>NUCLEOTIDE SEQUENCE [LARGE SCALE MRNA] OF 696-1124 (ISOFORMS 1/2)</scope>
    <source>
        <tissue>Squamous cell carcinoma</tissue>
        <tissue>Testis</tissue>
    </source>
</reference>
<reference key="3">
    <citation type="journal article" date="2007" name="BMC Genomics">
        <title>The full-ORF clone resource of the German cDNA consortium.</title>
        <authorList>
            <person name="Bechtel S."/>
            <person name="Rosenfelder H."/>
            <person name="Duda A."/>
            <person name="Schmidt C.P."/>
            <person name="Ernst U."/>
            <person name="Wellenreuther R."/>
            <person name="Mehrle A."/>
            <person name="Schuster C."/>
            <person name="Bahr A."/>
            <person name="Bloecker H."/>
            <person name="Heubner D."/>
            <person name="Hoerlein A."/>
            <person name="Michel G."/>
            <person name="Wedler H."/>
            <person name="Koehrer K."/>
            <person name="Ottenwaelder B."/>
            <person name="Poustka A."/>
            <person name="Wiemann S."/>
            <person name="Schupp I."/>
        </authorList>
    </citation>
    <scope>NUCLEOTIDE SEQUENCE [LARGE SCALE MRNA] OF 255-1124 (ISOFORM 1)</scope>
    <source>
        <tissue>Liver</tissue>
    </source>
</reference>
<reference key="4">
    <citation type="journal article" date="2004" name="Nat. Genet.">
        <title>Complete sequencing and characterization of 21,243 full-length human cDNAs.</title>
        <authorList>
            <person name="Ota T."/>
            <person name="Suzuki Y."/>
            <person name="Nishikawa T."/>
            <person name="Otsuki T."/>
            <person name="Sugiyama T."/>
            <person name="Irie R."/>
            <person name="Wakamatsu A."/>
            <person name="Hayashi K."/>
            <person name="Sato H."/>
            <person name="Nagai K."/>
            <person name="Kimura K."/>
            <person name="Makita H."/>
            <person name="Sekine M."/>
            <person name="Obayashi M."/>
            <person name="Nishi T."/>
            <person name="Shibahara T."/>
            <person name="Tanaka T."/>
            <person name="Ishii S."/>
            <person name="Yamamoto J."/>
            <person name="Saito K."/>
            <person name="Kawai Y."/>
            <person name="Isono Y."/>
            <person name="Nakamura Y."/>
            <person name="Nagahari K."/>
            <person name="Murakami K."/>
            <person name="Yasuda T."/>
            <person name="Iwayanagi T."/>
            <person name="Wagatsuma M."/>
            <person name="Shiratori A."/>
            <person name="Sudo H."/>
            <person name="Hosoiri T."/>
            <person name="Kaku Y."/>
            <person name="Kodaira H."/>
            <person name="Kondo H."/>
            <person name="Sugawara M."/>
            <person name="Takahashi M."/>
            <person name="Kanda K."/>
            <person name="Yokoi T."/>
            <person name="Furuya T."/>
            <person name="Kikkawa E."/>
            <person name="Omura Y."/>
            <person name="Abe K."/>
            <person name="Kamihara K."/>
            <person name="Katsuta N."/>
            <person name="Sato K."/>
            <person name="Tanikawa M."/>
            <person name="Yamazaki M."/>
            <person name="Ninomiya K."/>
            <person name="Ishibashi T."/>
            <person name="Yamashita H."/>
            <person name="Murakawa K."/>
            <person name="Fujimori K."/>
            <person name="Tanai H."/>
            <person name="Kimata M."/>
            <person name="Watanabe M."/>
            <person name="Hiraoka S."/>
            <person name="Chiba Y."/>
            <person name="Ishida S."/>
            <person name="Ono Y."/>
            <person name="Takiguchi S."/>
            <person name="Watanabe S."/>
            <person name="Yosida M."/>
            <person name="Hotuta T."/>
            <person name="Kusano J."/>
            <person name="Kanehori K."/>
            <person name="Takahashi-Fujii A."/>
            <person name="Hara H."/>
            <person name="Tanase T.-O."/>
            <person name="Nomura Y."/>
            <person name="Togiya S."/>
            <person name="Komai F."/>
            <person name="Hara R."/>
            <person name="Takeuchi K."/>
            <person name="Arita M."/>
            <person name="Imose N."/>
            <person name="Musashino K."/>
            <person name="Yuuki H."/>
            <person name="Oshima A."/>
            <person name="Sasaki N."/>
            <person name="Aotsuka S."/>
            <person name="Yoshikawa Y."/>
            <person name="Matsunawa H."/>
            <person name="Ichihara T."/>
            <person name="Shiohata N."/>
            <person name="Sano S."/>
            <person name="Moriya S."/>
            <person name="Momiyama H."/>
            <person name="Satoh N."/>
            <person name="Takami S."/>
            <person name="Terashima Y."/>
            <person name="Suzuki O."/>
            <person name="Nakagawa S."/>
            <person name="Senoh A."/>
            <person name="Mizoguchi H."/>
            <person name="Goto Y."/>
            <person name="Shimizu F."/>
            <person name="Wakebe H."/>
            <person name="Hishigaki H."/>
            <person name="Watanabe T."/>
            <person name="Sugiyama A."/>
            <person name="Takemoto M."/>
            <person name="Kawakami B."/>
            <person name="Yamazaki M."/>
            <person name="Watanabe K."/>
            <person name="Kumagai A."/>
            <person name="Itakura S."/>
            <person name="Fukuzumi Y."/>
            <person name="Fujimori Y."/>
            <person name="Komiyama M."/>
            <person name="Tashiro H."/>
            <person name="Tanigami A."/>
            <person name="Fujiwara T."/>
            <person name="Ono T."/>
            <person name="Yamada K."/>
            <person name="Fujii Y."/>
            <person name="Ozaki K."/>
            <person name="Hirao M."/>
            <person name="Ohmori Y."/>
            <person name="Kawabata A."/>
            <person name="Hikiji T."/>
            <person name="Kobatake N."/>
            <person name="Inagaki H."/>
            <person name="Ikema Y."/>
            <person name="Okamoto S."/>
            <person name="Okitani R."/>
            <person name="Kawakami T."/>
            <person name="Noguchi S."/>
            <person name="Itoh T."/>
            <person name="Shigeta K."/>
            <person name="Senba T."/>
            <person name="Matsumura K."/>
            <person name="Nakajima Y."/>
            <person name="Mizuno T."/>
            <person name="Morinaga M."/>
            <person name="Sasaki M."/>
            <person name="Togashi T."/>
            <person name="Oyama M."/>
            <person name="Hata H."/>
            <person name="Watanabe M."/>
            <person name="Komatsu T."/>
            <person name="Mizushima-Sugano J."/>
            <person name="Satoh T."/>
            <person name="Shirai Y."/>
            <person name="Takahashi Y."/>
            <person name="Nakagawa K."/>
            <person name="Okumura K."/>
            <person name="Nagase T."/>
            <person name="Nomura N."/>
            <person name="Kikuchi H."/>
            <person name="Masuho Y."/>
            <person name="Yamashita R."/>
            <person name="Nakai K."/>
            <person name="Yada T."/>
            <person name="Nakamura Y."/>
            <person name="Ohara O."/>
            <person name="Isogai T."/>
            <person name="Sugano S."/>
        </authorList>
    </citation>
    <scope>NUCLEOTIDE SEQUENCE [LARGE SCALE MRNA] OF 334-1124 (ISOFORM 2)</scope>
    <scope>NUCLEOTIDE SEQUENCE [LARGE SCALE MRNA] OF 580-1124 (ISOFORMS 1/2)</scope>
    <source>
        <tissue>Teratocarcinoma</tissue>
    </source>
</reference>
<reference key="5">
    <citation type="journal article" date="2002" name="Dev. Cell">
        <title>Self- and actin-templated assembly of mammalian septins.</title>
        <authorList>
            <person name="Kinoshita M."/>
            <person name="Field C.M."/>
            <person name="Coughlin M.L."/>
            <person name="Straight A.F."/>
            <person name="Mitchison T.J."/>
        </authorList>
    </citation>
    <scope>FUNCTION</scope>
</reference>
<reference key="6">
    <citation type="journal article" date="2003" name="Science">
        <title>Dissecting temporal and spatial control of cytokinesis with a myosin II inhibitor.</title>
        <authorList>
            <person name="Straight A.F."/>
            <person name="Cheung A."/>
            <person name="Limouze J."/>
            <person name="Chen I."/>
            <person name="Westwood N.J."/>
            <person name="Sellers J.R."/>
            <person name="Mitchison T.J."/>
        </authorList>
    </citation>
    <scope>SUBCELLULAR LOCATION</scope>
</reference>
<reference key="7">
    <citation type="journal article" date="2005" name="Cancer Res.">
        <title>ANLN plays a critical role in human lung carcinogenesis through the activation of RHOA and by involvement in the phosphoinositide 3-kinase/AKT pathway.</title>
        <authorList>
            <person name="Suzuki C."/>
            <person name="Daigo Y."/>
            <person name="Ishikawa N."/>
            <person name="Kato T."/>
            <person name="Hayama S."/>
            <person name="Ito T."/>
            <person name="Tsuchiya E."/>
            <person name="Nakamura Y."/>
        </authorList>
    </citation>
    <scope>FUNCTION</scope>
    <scope>INTERACTION WITH RHOA</scope>
    <scope>SUBCELLULAR LOCATION</scope>
    <scope>OVEREXPRESSION IN LUNG CANCER</scope>
    <scope>DEVELOPMENTAL STAGE</scope>
    <scope>PHOSPHORYLATION</scope>
</reference>
<reference key="8">
    <citation type="journal article" date="2005" name="Clin. Cancer Res.">
        <title>The septin-binding protein anillin is overexpressed in diverse human tumors.</title>
        <authorList>
            <person name="Hall P.A."/>
            <person name="Todd C.B."/>
            <person name="Hyland P.L."/>
            <person name="McDade S.S."/>
            <person name="Grabsch H."/>
            <person name="Dattani M."/>
            <person name="Hillan K.J."/>
            <person name="Russell S.E.H."/>
        </authorList>
    </citation>
    <scope>SUBCELLULAR LOCATION</scope>
    <scope>TISSUE SPECIFICITY</scope>
    <scope>DEVELOPMENTAL STAGE</scope>
    <scope>OVEREXPRESSION IN CANCERS</scope>
</reference>
<reference key="9">
    <citation type="journal article" date="2005" name="J. Biol. Chem.">
        <title>Anillin is a substrate of anaphase-promoting complex/cyclosome (APC/C) that controls spatial contractility of myosin during late cytokinesis.</title>
        <authorList>
            <person name="Zhao W.-M."/>
            <person name="Fang G."/>
        </authorList>
    </citation>
    <scope>FUNCTION</scope>
    <scope>INTERACTION WITH FZR1</scope>
    <scope>DEVELOPMENTAL STAGE</scope>
    <scope>UBIQUITINATION</scope>
    <scope>MUTAGENESIS OF ARG-41 AND LEU-44</scope>
</reference>
<reference key="10">
    <citation type="journal article" date="2005" name="Mol. Biol. Cell">
        <title>Anillin binds nonmuscle myosin II and regulates the contractile ring.</title>
        <authorList>
            <person name="Straight A.F."/>
            <person name="Field C.M."/>
            <person name="Mitchison T.J."/>
        </authorList>
    </citation>
    <scope>FUNCTION</scope>
    <scope>SUBCELLULAR LOCATION</scope>
</reference>
<reference key="11">
    <citation type="journal article" date="2005" name="Mol. Biol. Cell">
        <title>Ablation of PRC1 by small interfering RNA demonstrates that cytokinetic abscission requires a central spindle bundle in mammalian cells, whereas completion of furrowing does not.</title>
        <authorList>
            <person name="Mollinari C."/>
            <person name="Kleman J.-P."/>
            <person name="Saoudi Y."/>
            <person name="Jablonski S.A."/>
            <person name="Perard J."/>
            <person name="Yen T.J."/>
            <person name="Margolis R.L."/>
        </authorList>
    </citation>
    <scope>SUBCELLULAR LOCATION</scope>
</reference>
<reference key="12">
    <citation type="journal article" date="2005" name="Mol. Biol. Cell">
        <title>Clues to CD2-associated protein involvement in cytokinesis.</title>
        <authorList>
            <person name="Monzo P."/>
            <person name="Gauthier N.C."/>
            <person name="Keslair F."/>
            <person name="Loubat A."/>
            <person name="Field C.M."/>
            <person name="Le Marchand-Brustel Y."/>
            <person name="Cormont M."/>
        </authorList>
    </citation>
    <scope>INTERACTION WITH CD2AP</scope>
    <scope>SUBCELLULAR LOCATION</scope>
    <scope>DEVELOPMENTAL STAGE</scope>
    <scope>PHOSPHORYLATION</scope>
    <scope>MUTAGENESIS OF ARG-32</scope>
</reference>
<reference key="13">
    <citation type="journal article" date="2005" name="Proc. Natl. Acad. Sci. U.S.A.">
        <title>MgcRacGAP controls the assembly of the contractile ring and the initiation of cytokinesis.</title>
        <authorList>
            <person name="Zhao W.-M."/>
            <person name="Fang G."/>
        </authorList>
    </citation>
    <scope>SUBCELLULAR LOCATION</scope>
</reference>
<reference key="14">
    <citation type="journal article" date="2006" name="Nat. Biotechnol.">
        <title>A probability-based approach for high-throughput protein phosphorylation analysis and site localization.</title>
        <authorList>
            <person name="Beausoleil S.A."/>
            <person name="Villen J."/>
            <person name="Gerber S.A."/>
            <person name="Rush J."/>
            <person name="Gygi S.P."/>
        </authorList>
    </citation>
    <scope>PHOSPHORYLATION [LARGE SCALE ANALYSIS] AT SER-182; THR-194 AND THR-401</scope>
    <scope>VARIANT [LARGE SCALE ANALYSIS] LYS-185</scope>
    <scope>IDENTIFICATION BY MASS SPECTROMETRY [LARGE SCALE ANALYSIS]</scope>
    <source>
        <tissue>Cervix carcinoma</tissue>
    </source>
</reference>
<reference key="15">
    <citation type="journal article" date="2007" name="J. Proteome Res.">
        <title>Improved titanium dioxide enrichment of phosphopeptides from HeLa cells and high confident phosphopeptide identification by cross-validation of MS/MS and MS/MS/MS spectra.</title>
        <authorList>
            <person name="Yu L.R."/>
            <person name="Zhu Z."/>
            <person name="Chan K.C."/>
            <person name="Issaq H.J."/>
            <person name="Dimitrov D.S."/>
            <person name="Veenstra T.D."/>
        </authorList>
    </citation>
    <scope>PHOSPHORYLATION [LARGE SCALE ANALYSIS] AT SER-927</scope>
    <scope>IDENTIFICATION BY MASS SPECTROMETRY [LARGE SCALE ANALYSIS]</scope>
    <source>
        <tissue>Cervix carcinoma</tissue>
    </source>
</reference>
<reference key="16">
    <citation type="journal article" date="2008" name="J. Proteome Res.">
        <title>Combining protein-based IMAC, peptide-based IMAC, and MudPIT for efficient phosphoproteomic analysis.</title>
        <authorList>
            <person name="Cantin G.T."/>
            <person name="Yi W."/>
            <person name="Lu B."/>
            <person name="Park S.K."/>
            <person name="Xu T."/>
            <person name="Lee J.-D."/>
            <person name="Yates J.R. III"/>
        </authorList>
    </citation>
    <scope>PHOSPHORYLATION [LARGE SCALE ANALYSIS] AT SER-661</scope>
    <scope>IDENTIFICATION BY MASS SPECTROMETRY [LARGE SCALE ANALYSIS]</scope>
    <source>
        <tissue>Cervix carcinoma</tissue>
    </source>
</reference>
<reference key="17">
    <citation type="journal article" date="2008" name="Proc. Natl. Acad. Sci. U.S.A.">
        <title>A quantitative atlas of mitotic phosphorylation.</title>
        <authorList>
            <person name="Dephoure N."/>
            <person name="Zhou C."/>
            <person name="Villen J."/>
            <person name="Beausoleil S.A."/>
            <person name="Bakalarski C.E."/>
            <person name="Elledge S.J."/>
            <person name="Gygi S.P."/>
        </authorList>
    </citation>
    <scope>PHOSPHORYLATION [LARGE SCALE ANALYSIS] AT SER-54; SER-72; SER-102; SER-172; THR-320; SER-323; THR-364; THR-397; THR-401; SER-485; SER-518; SER-553; SER-658; SER-661; SER-664; SER-792 AND SER-927</scope>
    <scope>IDENTIFICATION BY MASS SPECTROMETRY [LARGE SCALE ANALYSIS]</scope>
    <source>
        <tissue>Cervix carcinoma</tissue>
    </source>
</reference>
<reference key="18">
    <citation type="journal article" date="2009" name="Anal. Chem.">
        <title>Lys-N and trypsin cover complementary parts of the phosphoproteome in a refined SCX-based approach.</title>
        <authorList>
            <person name="Gauci S."/>
            <person name="Helbig A.O."/>
            <person name="Slijper M."/>
            <person name="Krijgsveld J."/>
            <person name="Heck A.J."/>
            <person name="Mohammed S."/>
        </authorList>
    </citation>
    <scope>IDENTIFICATION BY MASS SPECTROMETRY [LARGE SCALE ANALYSIS]</scope>
</reference>
<reference key="19">
    <citation type="journal article" date="2009" name="Sci. Signal.">
        <title>Quantitative phosphoproteomic analysis of T cell receptor signaling reveals system-wide modulation of protein-protein interactions.</title>
        <authorList>
            <person name="Mayya V."/>
            <person name="Lundgren D.H."/>
            <person name="Hwang S.-I."/>
            <person name="Rezaul K."/>
            <person name="Wu L."/>
            <person name="Eng J.K."/>
            <person name="Rodionov V."/>
            <person name="Han D.K."/>
        </authorList>
    </citation>
    <scope>PHOSPHORYLATION [LARGE SCALE ANALYSIS] AT SER-54 AND SER-323</scope>
    <scope>IDENTIFICATION BY MASS SPECTROMETRY [LARGE SCALE ANALYSIS]</scope>
    <source>
        <tissue>Leukemic T-cell</tissue>
    </source>
</reference>
<reference key="20">
    <citation type="journal article" date="2009" name="Science">
        <title>Lysine acetylation targets protein complexes and co-regulates major cellular functions.</title>
        <authorList>
            <person name="Choudhary C."/>
            <person name="Kumar C."/>
            <person name="Gnad F."/>
            <person name="Nielsen M.L."/>
            <person name="Rehman M."/>
            <person name="Walther T.C."/>
            <person name="Olsen J.V."/>
            <person name="Mann M."/>
        </authorList>
    </citation>
    <scope>ACETYLATION [LARGE SCALE ANALYSIS] AT LYS-371</scope>
    <scope>IDENTIFICATION BY MASS SPECTROMETRY [LARGE SCALE ANALYSIS]</scope>
</reference>
<reference key="21">
    <citation type="journal article" date="2010" name="Sci. Signal.">
        <title>Quantitative phosphoproteomics reveals widespread full phosphorylation site occupancy during mitosis.</title>
        <authorList>
            <person name="Olsen J.V."/>
            <person name="Vermeulen M."/>
            <person name="Santamaria A."/>
            <person name="Kumar C."/>
            <person name="Miller M.L."/>
            <person name="Jensen L.J."/>
            <person name="Gnad F."/>
            <person name="Cox J."/>
            <person name="Jensen T.S."/>
            <person name="Nigg E.A."/>
            <person name="Brunak S."/>
            <person name="Mann M."/>
        </authorList>
    </citation>
    <scope>PHOSPHORYLATION [LARGE SCALE ANALYSIS] AT SER-54; SER-449; SER-553; SER-561; SER-642; SER-658; SER-661; SER-792 AND SER-927</scope>
    <scope>IDENTIFICATION BY MASS SPECTROMETRY [LARGE SCALE ANALYSIS]</scope>
    <source>
        <tissue>Cervix carcinoma</tissue>
    </source>
</reference>
<reference key="22">
    <citation type="journal article" date="2011" name="BMC Syst. Biol.">
        <title>Initial characterization of the human central proteome.</title>
        <authorList>
            <person name="Burkard T.R."/>
            <person name="Planyavsky M."/>
            <person name="Kaupe I."/>
            <person name="Breitwieser F.P."/>
            <person name="Buerckstuemmer T."/>
            <person name="Bennett K.L."/>
            <person name="Superti-Furga G."/>
            <person name="Colinge J."/>
        </authorList>
    </citation>
    <scope>IDENTIFICATION BY MASS SPECTROMETRY [LARGE SCALE ANALYSIS]</scope>
</reference>
<reference key="23">
    <citation type="journal article" date="2011" name="Sci. Signal.">
        <title>System-wide temporal characterization of the proteome and phosphoproteome of human embryonic stem cell differentiation.</title>
        <authorList>
            <person name="Rigbolt K.T."/>
            <person name="Prokhorova T.A."/>
            <person name="Akimov V."/>
            <person name="Henningsen J."/>
            <person name="Johansen P.T."/>
            <person name="Kratchmarova I."/>
            <person name="Kassem M."/>
            <person name="Mann M."/>
            <person name="Olsen J.V."/>
            <person name="Blagoev B."/>
        </authorList>
    </citation>
    <scope>PHOSPHORYLATION [LARGE SCALE ANALYSIS] AT SER-485 AND SER-792</scope>
    <scope>IDENTIFICATION BY MASS SPECTROMETRY [LARGE SCALE ANALYSIS]</scope>
</reference>
<reference key="24">
    <citation type="journal article" date="2012" name="Proc. Natl. Acad. Sci. U.S.A.">
        <title>N-terminal acetylome analyses and functional insights of the N-terminal acetyltransferase NatB.</title>
        <authorList>
            <person name="Van Damme P."/>
            <person name="Lasa M."/>
            <person name="Polevoda B."/>
            <person name="Gazquez C."/>
            <person name="Elosegui-Artola A."/>
            <person name="Kim D.S."/>
            <person name="De Juan-Pardo E."/>
            <person name="Demeyer K."/>
            <person name="Hole K."/>
            <person name="Larrea E."/>
            <person name="Timmerman E."/>
            <person name="Prieto J."/>
            <person name="Arnesen T."/>
            <person name="Sherman F."/>
            <person name="Gevaert K."/>
            <person name="Aldabe R."/>
        </authorList>
    </citation>
    <scope>ACETYLATION [LARGE SCALE ANALYSIS] AT MET-1</scope>
    <scope>IDENTIFICATION BY MASS SPECTROMETRY [LARGE SCALE ANALYSIS]</scope>
</reference>
<reference key="25">
    <citation type="journal article" date="2013" name="Cell">
        <title>Cortical dynein and asymmetric membrane elongation coordinately position the spindle in anaphase.</title>
        <authorList>
            <person name="Kiyomitsu T."/>
            <person name="Cheeseman I.M."/>
        </authorList>
    </citation>
    <scope>FUNCTION</scope>
    <scope>SUBCELLULAR LOCATION</scope>
</reference>
<reference key="26">
    <citation type="journal article" date="2013" name="J. Proteome Res.">
        <title>Toward a comprehensive characterization of a human cancer cell phosphoproteome.</title>
        <authorList>
            <person name="Zhou H."/>
            <person name="Di Palma S."/>
            <person name="Preisinger C."/>
            <person name="Peng M."/>
            <person name="Polat A.N."/>
            <person name="Heck A.J."/>
            <person name="Mohammed S."/>
        </authorList>
    </citation>
    <scope>PHOSPHORYLATION [LARGE SCALE ANALYSIS] AT SER-54; SER-225; SER-252; SER-339; THR-364; THR-401; SER-417; SER-419; SER-485; SER-518; SER-637; SER-642; SER-658; SER-661; SER-678; SER-688; SER-792 AND SER-927</scope>
    <scope>IDENTIFICATION BY MASS SPECTROMETRY [LARGE SCALE ANALYSIS]</scope>
    <source>
        <tissue>Cervix carcinoma</tissue>
        <tissue>Erythroleukemia</tissue>
    </source>
</reference>
<reference key="27">
    <citation type="journal article" date="2014" name="J. Am. Soc. Nephrol.">
        <title>Mutations in the gene that encodes the F-actin binding protein anillin cause FSGS.</title>
        <authorList>
            <person name="Gbadegesin R.A."/>
            <person name="Hall G."/>
            <person name="Adeyemo A."/>
            <person name="Hanke N."/>
            <person name="Tossidou I."/>
            <person name="Burchette J."/>
            <person name="Wu G."/>
            <person name="Homstad A."/>
            <person name="Sparks M.A."/>
            <person name="Gomez J."/>
            <person name="Jiang R."/>
            <person name="Alonso A."/>
            <person name="Lavin P."/>
            <person name="Conlon P."/>
            <person name="Korstanje R."/>
            <person name="Stander M.C."/>
            <person name="Shamsan G."/>
            <person name="Barua M."/>
            <person name="Spurney R."/>
            <person name="Singhal P.C."/>
            <person name="Kopp J.B."/>
            <person name="Haller H."/>
            <person name="Howell D."/>
            <person name="Pollak M.R."/>
            <person name="Shaw A.S."/>
            <person name="Schiffer M."/>
            <person name="Winn M.P."/>
        </authorList>
    </citation>
    <scope>FUNCTION</scope>
    <scope>INVOLVEMENT IN FSGS8</scope>
    <scope>TISSUE SPECIFICITY</scope>
    <scope>VARIANTS FSGS8 CYS-431 AND CYS-618</scope>
    <scope>CHARACTERIZATION OF VARIANT FSGS8 CYS-431</scope>
</reference>
<reference key="28">
    <citation type="journal article" date="2014" name="Proc. Natl. Acad. Sci. U.S.A.">
        <title>Mapping of SUMO sites and analysis of SUMOylation changes induced by external stimuli.</title>
        <authorList>
            <person name="Impens F."/>
            <person name="Radoshevich L."/>
            <person name="Cossart P."/>
            <person name="Ribet D."/>
        </authorList>
    </citation>
    <scope>SUMOYLATION [LARGE SCALE ANALYSIS] AT LYS-254</scope>
    <scope>IDENTIFICATION BY MASS SPECTROMETRY [LARGE SCALE ANALYSIS]</scope>
</reference>
<protein>
    <recommendedName>
        <fullName>Anillin</fullName>
    </recommendedName>
</protein>
<dbReference type="EMBL" id="AF273437">
    <property type="protein sequence ID" value="AAF75796.1"/>
    <property type="molecule type" value="mRNA"/>
</dbReference>
<dbReference type="EMBL" id="BC034692">
    <property type="protein sequence ID" value="AAH34692.1"/>
    <property type="status" value="ALT_INIT"/>
    <property type="molecule type" value="mRNA"/>
</dbReference>
<dbReference type="EMBL" id="BC070066">
    <property type="protein sequence ID" value="AAH70066.1"/>
    <property type="molecule type" value="mRNA"/>
</dbReference>
<dbReference type="EMBL" id="CR936650">
    <property type="protein sequence ID" value="CAI56788.1"/>
    <property type="molecule type" value="mRNA"/>
</dbReference>
<dbReference type="EMBL" id="AK001468">
    <property type="protein sequence ID" value="BAA91710.1"/>
    <property type="status" value="ALT_INIT"/>
    <property type="molecule type" value="mRNA"/>
</dbReference>
<dbReference type="EMBL" id="AK001472">
    <property type="protein sequence ID" value="BAA91711.1"/>
    <property type="status" value="ALT_INIT"/>
    <property type="molecule type" value="mRNA"/>
</dbReference>
<dbReference type="EMBL" id="AK023208">
    <property type="protein sequence ID" value="BAB14463.1"/>
    <property type="molecule type" value="mRNA"/>
</dbReference>
<dbReference type="CCDS" id="CCDS5447.1">
    <molecule id="Q9NQW6-1"/>
</dbReference>
<dbReference type="CCDS" id="CCDS64628.1">
    <molecule id="Q9NQW6-2"/>
</dbReference>
<dbReference type="RefSeq" id="NP_001271230.1">
    <molecule id="Q9NQW6-2"/>
    <property type="nucleotide sequence ID" value="NM_001284301.3"/>
</dbReference>
<dbReference type="RefSeq" id="NP_001271231.1">
    <property type="nucleotide sequence ID" value="NM_001284302.2"/>
</dbReference>
<dbReference type="RefSeq" id="NP_061155.2">
    <molecule id="Q9NQW6-1"/>
    <property type="nucleotide sequence ID" value="NM_018685.4"/>
</dbReference>
<dbReference type="PDB" id="2Y7B">
    <property type="method" value="X-ray"/>
    <property type="resolution" value="1.90 A"/>
    <property type="chains" value="A=980-1113"/>
</dbReference>
<dbReference type="PDB" id="4XH3">
    <property type="method" value="X-ray"/>
    <property type="resolution" value="2.10 A"/>
    <property type="chains" value="A=712-1124"/>
</dbReference>
<dbReference type="PDB" id="4XOI">
    <property type="method" value="X-ray"/>
    <property type="resolution" value="2.09 A"/>
    <property type="chains" value="B/D=712-981"/>
</dbReference>
<dbReference type="PDBsum" id="2Y7B"/>
<dbReference type="PDBsum" id="4XH3"/>
<dbReference type="PDBsum" id="4XOI"/>
<dbReference type="SMR" id="Q9NQW6"/>
<dbReference type="BioGRID" id="119959">
    <property type="interactions" value="1801"/>
</dbReference>
<dbReference type="FunCoup" id="Q9NQW6">
    <property type="interactions" value="861"/>
</dbReference>
<dbReference type="IntAct" id="Q9NQW6">
    <property type="interactions" value="228"/>
</dbReference>
<dbReference type="MINT" id="Q9NQW6"/>
<dbReference type="STRING" id="9606.ENSP00000265748"/>
<dbReference type="GlyGen" id="Q9NQW6">
    <property type="glycosylation" value="3 sites, 1 O-linked glycan (2 sites)"/>
</dbReference>
<dbReference type="iPTMnet" id="Q9NQW6"/>
<dbReference type="MetOSite" id="Q9NQW6"/>
<dbReference type="PhosphoSitePlus" id="Q9NQW6"/>
<dbReference type="SwissPalm" id="Q9NQW6"/>
<dbReference type="BioMuta" id="ANLN"/>
<dbReference type="DMDM" id="90111962"/>
<dbReference type="jPOST" id="Q9NQW6"/>
<dbReference type="MassIVE" id="Q9NQW6"/>
<dbReference type="PaxDb" id="9606-ENSP00000265748"/>
<dbReference type="PeptideAtlas" id="Q9NQW6"/>
<dbReference type="ProteomicsDB" id="82209">
    <molecule id="Q9NQW6-1"/>
</dbReference>
<dbReference type="ProteomicsDB" id="82210">
    <molecule id="Q9NQW6-2"/>
</dbReference>
<dbReference type="Pumba" id="Q9NQW6"/>
<dbReference type="Antibodypedia" id="26544">
    <property type="antibodies" value="241 antibodies from 33 providers"/>
</dbReference>
<dbReference type="DNASU" id="54443"/>
<dbReference type="Ensembl" id="ENST00000265748.7">
    <molecule id="Q9NQW6-1"/>
    <property type="protein sequence ID" value="ENSP00000265748.2"/>
    <property type="gene ID" value="ENSG00000011426.11"/>
</dbReference>
<dbReference type="Ensembl" id="ENST00000396068.6">
    <molecule id="Q9NQW6-2"/>
    <property type="protein sequence ID" value="ENSP00000379380.2"/>
    <property type="gene ID" value="ENSG00000011426.11"/>
</dbReference>
<dbReference type="GeneID" id="54443"/>
<dbReference type="KEGG" id="hsa:54443"/>
<dbReference type="MANE-Select" id="ENST00000265748.7">
    <property type="protein sequence ID" value="ENSP00000265748.2"/>
    <property type="RefSeq nucleotide sequence ID" value="NM_018685.5"/>
    <property type="RefSeq protein sequence ID" value="NP_061155.2"/>
</dbReference>
<dbReference type="UCSC" id="uc003tff.4">
    <molecule id="Q9NQW6-1"/>
    <property type="organism name" value="human"/>
</dbReference>
<dbReference type="AGR" id="HGNC:14082"/>
<dbReference type="CTD" id="54443"/>
<dbReference type="DisGeNET" id="54443"/>
<dbReference type="GeneCards" id="ANLN"/>
<dbReference type="HGNC" id="HGNC:14082">
    <property type="gene designation" value="ANLN"/>
</dbReference>
<dbReference type="HPA" id="ENSG00000011426">
    <property type="expression patterns" value="Tissue enriched (brain)"/>
</dbReference>
<dbReference type="MalaCards" id="ANLN"/>
<dbReference type="MIM" id="616027">
    <property type="type" value="gene"/>
</dbReference>
<dbReference type="MIM" id="616032">
    <property type="type" value="phenotype"/>
</dbReference>
<dbReference type="neXtProt" id="NX_Q9NQW6"/>
<dbReference type="OpenTargets" id="ENSG00000011426"/>
<dbReference type="Orphanet" id="656">
    <property type="disease" value="Hereditary steroid-resistant nephrotic syndrome"/>
</dbReference>
<dbReference type="PharmGKB" id="PA24809"/>
<dbReference type="VEuPathDB" id="HostDB:ENSG00000011426"/>
<dbReference type="eggNOG" id="KOG3640">
    <property type="taxonomic scope" value="Eukaryota"/>
</dbReference>
<dbReference type="GeneTree" id="ENSGT00390000008749"/>
<dbReference type="HOGENOM" id="CLU_009118_0_0_1"/>
<dbReference type="InParanoid" id="Q9NQW6"/>
<dbReference type="OMA" id="PKIEQQT"/>
<dbReference type="OrthoDB" id="5915976at2759"/>
<dbReference type="PAN-GO" id="Q9NQW6">
    <property type="GO annotations" value="4 GO annotations based on evolutionary models"/>
</dbReference>
<dbReference type="PhylomeDB" id="Q9NQW6"/>
<dbReference type="TreeFam" id="TF106494"/>
<dbReference type="PathwayCommons" id="Q9NQW6"/>
<dbReference type="Reactome" id="R-HSA-8980692">
    <property type="pathway name" value="RHOA GTPase cycle"/>
</dbReference>
<dbReference type="Reactome" id="R-HSA-9013026">
    <property type="pathway name" value="RHOB GTPase cycle"/>
</dbReference>
<dbReference type="Reactome" id="R-HSA-9013106">
    <property type="pathway name" value="RHOC GTPase cycle"/>
</dbReference>
<dbReference type="SignaLink" id="Q9NQW6"/>
<dbReference type="SIGNOR" id="Q9NQW6"/>
<dbReference type="BioGRID-ORCS" id="54443">
    <property type="hits" value="402 hits in 1163 CRISPR screens"/>
</dbReference>
<dbReference type="CD-CODE" id="91857CE7">
    <property type="entry name" value="Nucleolus"/>
</dbReference>
<dbReference type="ChiTaRS" id="ANLN">
    <property type="organism name" value="human"/>
</dbReference>
<dbReference type="EvolutionaryTrace" id="Q9NQW6"/>
<dbReference type="GeneWiki" id="ANLN"/>
<dbReference type="GenomeRNAi" id="54443"/>
<dbReference type="Pharos" id="Q9NQW6">
    <property type="development level" value="Tbio"/>
</dbReference>
<dbReference type="PRO" id="PR:Q9NQW6"/>
<dbReference type="Proteomes" id="UP000005640">
    <property type="component" value="Chromosome 7"/>
</dbReference>
<dbReference type="RNAct" id="Q9NQW6">
    <property type="molecule type" value="protein"/>
</dbReference>
<dbReference type="Bgee" id="ENSG00000011426">
    <property type="expression patterns" value="Expressed in corpus callosum and 155 other cell types or tissues"/>
</dbReference>
<dbReference type="ExpressionAtlas" id="Q9NQW6">
    <property type="expression patterns" value="baseline and differential"/>
</dbReference>
<dbReference type="GO" id="GO:0015629">
    <property type="term" value="C:actin cytoskeleton"/>
    <property type="evidence" value="ECO:0000314"/>
    <property type="project" value="MGI"/>
</dbReference>
<dbReference type="GO" id="GO:0005826">
    <property type="term" value="C:actomyosin contractile ring"/>
    <property type="evidence" value="ECO:0000314"/>
    <property type="project" value="MGI"/>
</dbReference>
<dbReference type="GO" id="GO:0032059">
    <property type="term" value="C:bleb"/>
    <property type="evidence" value="ECO:0000314"/>
    <property type="project" value="UniProtKB"/>
</dbReference>
<dbReference type="GO" id="GO:0005938">
    <property type="term" value="C:cell cortex"/>
    <property type="evidence" value="ECO:0000314"/>
    <property type="project" value="UniProtKB"/>
</dbReference>
<dbReference type="GO" id="GO:0005829">
    <property type="term" value="C:cytosol"/>
    <property type="evidence" value="ECO:0000304"/>
    <property type="project" value="Reactome"/>
</dbReference>
<dbReference type="GO" id="GO:0030496">
    <property type="term" value="C:midbody"/>
    <property type="evidence" value="ECO:0000314"/>
    <property type="project" value="HPA"/>
</dbReference>
<dbReference type="GO" id="GO:0005654">
    <property type="term" value="C:nucleoplasm"/>
    <property type="evidence" value="ECO:0000314"/>
    <property type="project" value="HPA"/>
</dbReference>
<dbReference type="GO" id="GO:0003779">
    <property type="term" value="F:actin binding"/>
    <property type="evidence" value="ECO:0000314"/>
    <property type="project" value="MGI"/>
</dbReference>
<dbReference type="GO" id="GO:0045296">
    <property type="term" value="F:cadherin binding"/>
    <property type="evidence" value="ECO:0007005"/>
    <property type="project" value="BHF-UCL"/>
</dbReference>
<dbReference type="GO" id="GO:0000915">
    <property type="term" value="P:actomyosin contractile ring assembly"/>
    <property type="evidence" value="ECO:0000318"/>
    <property type="project" value="GO_Central"/>
</dbReference>
<dbReference type="GO" id="GO:0002244">
    <property type="term" value="P:hematopoietic progenitor cell differentiation"/>
    <property type="evidence" value="ECO:0007669"/>
    <property type="project" value="Ensembl"/>
</dbReference>
<dbReference type="GO" id="GO:0000281">
    <property type="term" value="P:mitotic cytokinesis"/>
    <property type="evidence" value="ECO:0000314"/>
    <property type="project" value="MGI"/>
</dbReference>
<dbReference type="GO" id="GO:0090521">
    <property type="term" value="P:podocyte cell migration"/>
    <property type="evidence" value="ECO:0000315"/>
    <property type="project" value="UniProtKB"/>
</dbReference>
<dbReference type="GO" id="GO:1904172">
    <property type="term" value="P:positive regulation of bleb assembly"/>
    <property type="evidence" value="ECO:0000315"/>
    <property type="project" value="UniProtKB"/>
</dbReference>
<dbReference type="GO" id="GO:0007096">
    <property type="term" value="P:regulation of exit from mitosis"/>
    <property type="evidence" value="ECO:0000304"/>
    <property type="project" value="ProtInc"/>
</dbReference>
<dbReference type="GO" id="GO:0000921">
    <property type="term" value="P:septin ring assembly"/>
    <property type="evidence" value="ECO:0000304"/>
    <property type="project" value="ProtInc"/>
</dbReference>
<dbReference type="GO" id="GO:0031106">
    <property type="term" value="P:septin ring organization"/>
    <property type="evidence" value="ECO:0000318"/>
    <property type="project" value="GO_Central"/>
</dbReference>
<dbReference type="CDD" id="cd01263">
    <property type="entry name" value="PH_anillin"/>
    <property type="match status" value="1"/>
</dbReference>
<dbReference type="FunFam" id="2.30.29.30:FF:000111">
    <property type="entry name" value="anillin isoform X1"/>
    <property type="match status" value="1"/>
</dbReference>
<dbReference type="Gene3D" id="2.30.29.30">
    <property type="entry name" value="Pleckstrin-homology domain (PH domain)/Phosphotyrosine-binding domain (PTB)"/>
    <property type="match status" value="1"/>
</dbReference>
<dbReference type="InterPro" id="IPR012966">
    <property type="entry name" value="AHD"/>
</dbReference>
<dbReference type="InterPro" id="IPR031970">
    <property type="entry name" value="Anillin_N"/>
</dbReference>
<dbReference type="InterPro" id="IPR051364">
    <property type="entry name" value="Cytokinesis/Rho-signaling"/>
</dbReference>
<dbReference type="InterPro" id="IPR011993">
    <property type="entry name" value="PH-like_dom_sf"/>
</dbReference>
<dbReference type="InterPro" id="IPR037840">
    <property type="entry name" value="PH_Anillin"/>
</dbReference>
<dbReference type="InterPro" id="IPR001849">
    <property type="entry name" value="PH_domain"/>
</dbReference>
<dbReference type="PANTHER" id="PTHR21538:SF27">
    <property type="entry name" value="ANILLIN"/>
    <property type="match status" value="1"/>
</dbReference>
<dbReference type="PANTHER" id="PTHR21538">
    <property type="entry name" value="ANILLIN/RHOTEKIN RTKN"/>
    <property type="match status" value="1"/>
</dbReference>
<dbReference type="Pfam" id="PF08174">
    <property type="entry name" value="Anillin"/>
    <property type="match status" value="1"/>
</dbReference>
<dbReference type="Pfam" id="PF16018">
    <property type="entry name" value="Anillin_N"/>
    <property type="match status" value="2"/>
</dbReference>
<dbReference type="Pfam" id="PF00169">
    <property type="entry name" value="PH"/>
    <property type="match status" value="1"/>
</dbReference>
<dbReference type="SMART" id="SM00233">
    <property type="entry name" value="PH"/>
    <property type="match status" value="1"/>
</dbReference>
<dbReference type="SUPFAM" id="SSF50729">
    <property type="entry name" value="PH domain-like"/>
    <property type="match status" value="1"/>
</dbReference>
<dbReference type="PROSITE" id="PS50003">
    <property type="entry name" value="PH_DOMAIN"/>
    <property type="match status" value="1"/>
</dbReference>
<organism>
    <name type="scientific">Homo sapiens</name>
    <name type="common">Human</name>
    <dbReference type="NCBI Taxonomy" id="9606"/>
    <lineage>
        <taxon>Eukaryota</taxon>
        <taxon>Metazoa</taxon>
        <taxon>Chordata</taxon>
        <taxon>Craniata</taxon>
        <taxon>Vertebrata</taxon>
        <taxon>Euteleostomi</taxon>
        <taxon>Mammalia</taxon>
        <taxon>Eutheria</taxon>
        <taxon>Euarchontoglires</taxon>
        <taxon>Primates</taxon>
        <taxon>Haplorrhini</taxon>
        <taxon>Catarrhini</taxon>
        <taxon>Hominidae</taxon>
        <taxon>Homo</taxon>
    </lineage>
</organism>
<proteinExistence type="evidence at protein level"/>
<feature type="chain" id="PRO_0000227965" description="Anillin">
    <location>
        <begin position="1"/>
        <end position="1124"/>
    </location>
</feature>
<feature type="domain" description="PH" evidence="3">
    <location>
        <begin position="983"/>
        <end position="1107"/>
    </location>
</feature>
<feature type="region of interest" description="Nuclear localization">
    <location>
        <begin position="1"/>
        <end position="230"/>
    </location>
</feature>
<feature type="region of interest" description="Interaction with CD2AP" evidence="8">
    <location>
        <begin position="1"/>
        <end position="155"/>
    </location>
</feature>
<feature type="region of interest" description="Disordered" evidence="4">
    <location>
        <begin position="1"/>
        <end position="113"/>
    </location>
</feature>
<feature type="region of interest" description="Required for ubiquitination">
    <location>
        <begin position="1"/>
        <end position="45"/>
    </location>
</feature>
<feature type="region of interest" description="Disordered" evidence="4">
    <location>
        <begin position="136"/>
        <end position="196"/>
    </location>
</feature>
<feature type="region of interest" description="Interaction with F-actin">
    <location>
        <begin position="231"/>
        <end position="676"/>
    </location>
</feature>
<feature type="region of interest" description="Disordered" evidence="4">
    <location>
        <begin position="294"/>
        <end position="328"/>
    </location>
</feature>
<feature type="region of interest" description="Disordered" evidence="4">
    <location>
        <begin position="380"/>
        <end position="399"/>
    </location>
</feature>
<feature type="region of interest" description="Disordered" evidence="4">
    <location>
        <begin position="579"/>
        <end position="600"/>
    </location>
</feature>
<feature type="region of interest" description="Disordered" evidence="4">
    <location>
        <begin position="625"/>
        <end position="664"/>
    </location>
</feature>
<feature type="region of interest" description="Localization to the cleavage furrow">
    <location>
        <begin position="730"/>
        <end position="1124"/>
    </location>
</feature>
<feature type="coiled-coil region" evidence="2">
    <location>
        <begin position="569"/>
        <end position="604"/>
    </location>
</feature>
<feature type="compositionally biased region" description="Basic and acidic residues" evidence="4">
    <location>
        <begin position="1"/>
        <end position="25"/>
    </location>
</feature>
<feature type="compositionally biased region" description="Polar residues" evidence="4">
    <location>
        <begin position="77"/>
        <end position="96"/>
    </location>
</feature>
<feature type="compositionally biased region" description="Low complexity" evidence="4">
    <location>
        <begin position="97"/>
        <end position="108"/>
    </location>
</feature>
<feature type="compositionally biased region" description="Basic and acidic residues" evidence="4">
    <location>
        <begin position="148"/>
        <end position="158"/>
    </location>
</feature>
<feature type="compositionally biased region" description="Polar residues" evidence="4">
    <location>
        <begin position="294"/>
        <end position="305"/>
    </location>
</feature>
<feature type="compositionally biased region" description="Basic and acidic residues" evidence="4">
    <location>
        <begin position="380"/>
        <end position="389"/>
    </location>
</feature>
<feature type="compositionally biased region" description="Basic and acidic residues" evidence="4">
    <location>
        <begin position="631"/>
        <end position="644"/>
    </location>
</feature>
<feature type="compositionally biased region" description="Basic and acidic residues" evidence="4">
    <location>
        <begin position="654"/>
        <end position="664"/>
    </location>
</feature>
<feature type="modified residue" description="N-acetylmethionine" evidence="25">
    <location>
        <position position="1"/>
    </location>
</feature>
<feature type="modified residue" description="Phosphoserine" evidence="20 22 23 26">
    <location>
        <position position="54"/>
    </location>
</feature>
<feature type="modified residue" description="Phosphoserine" evidence="20">
    <location>
        <position position="72"/>
    </location>
</feature>
<feature type="modified residue" description="Phosphoserine" evidence="1">
    <location>
        <position position="97"/>
    </location>
</feature>
<feature type="modified residue" description="Phosphoserine" evidence="20">
    <location>
        <position position="102"/>
    </location>
</feature>
<feature type="modified residue" description="Phosphoserine" evidence="20">
    <location>
        <position position="172"/>
    </location>
</feature>
<feature type="modified residue" description="Phosphoserine" evidence="17">
    <location>
        <position position="182"/>
    </location>
</feature>
<feature type="modified residue" description="Phosphothreonine" evidence="17">
    <location>
        <position position="194"/>
    </location>
</feature>
<feature type="modified residue" description="Phosphoserine" evidence="26">
    <location>
        <position position="225"/>
    </location>
</feature>
<feature type="modified residue" description="Phosphoserine" evidence="26">
    <location>
        <position position="252"/>
    </location>
</feature>
<feature type="modified residue" description="Phosphoserine" evidence="1">
    <location>
        <position position="261"/>
    </location>
</feature>
<feature type="modified residue" description="Phosphothreonine" evidence="20">
    <location>
        <position position="320"/>
    </location>
</feature>
<feature type="modified residue" description="Phosphoserine" evidence="20 22">
    <location>
        <position position="323"/>
    </location>
</feature>
<feature type="modified residue" description="Phosphoserine" evidence="26">
    <location>
        <position position="339"/>
    </location>
</feature>
<feature type="modified residue" description="Phosphothreonine" evidence="20 26">
    <location>
        <position position="364"/>
    </location>
</feature>
<feature type="modified residue" description="N6-acetyllysine" evidence="21">
    <location>
        <position position="371"/>
    </location>
</feature>
<feature type="modified residue" description="Phosphothreonine" evidence="20">
    <location>
        <position position="397"/>
    </location>
</feature>
<feature type="modified residue" description="Phosphothreonine" evidence="17 20 26">
    <location>
        <position position="401"/>
    </location>
</feature>
<feature type="modified residue" description="Phosphoserine" evidence="26">
    <location>
        <position position="417"/>
    </location>
</feature>
<feature type="modified residue" description="Phosphoserine" evidence="26">
    <location>
        <position position="419"/>
    </location>
</feature>
<feature type="modified residue" description="Phosphoserine" evidence="23">
    <location>
        <position position="449"/>
    </location>
</feature>
<feature type="modified residue" description="Phosphoserine" evidence="20 24 26">
    <location>
        <position position="485"/>
    </location>
</feature>
<feature type="modified residue" description="Phosphoserine" evidence="20 26">
    <location>
        <position position="518"/>
    </location>
</feature>
<feature type="modified residue" description="Phosphoserine" evidence="20 23">
    <location>
        <position position="553"/>
    </location>
</feature>
<feature type="modified residue" description="Phosphoserine" evidence="23">
    <location>
        <position position="561"/>
    </location>
</feature>
<feature type="modified residue" description="Phosphoserine" evidence="26">
    <location>
        <position position="637"/>
    </location>
</feature>
<feature type="modified residue" description="Phosphoserine" evidence="23 26">
    <location>
        <position position="642"/>
    </location>
</feature>
<feature type="modified residue" description="Phosphoserine" evidence="20 23 26">
    <location>
        <position position="658"/>
    </location>
</feature>
<feature type="modified residue" description="Phosphoserine" evidence="19 20 23 26">
    <location>
        <position position="661"/>
    </location>
</feature>
<feature type="modified residue" description="Phosphoserine" evidence="20">
    <location>
        <position position="664"/>
    </location>
</feature>
<feature type="modified residue" description="Phosphotyrosine" evidence="1">
    <location>
        <position position="671"/>
    </location>
</feature>
<feature type="modified residue" description="Phosphoserine" evidence="26">
    <location>
        <position position="678"/>
    </location>
</feature>
<feature type="modified residue" description="Phosphoserine" evidence="26">
    <location>
        <position position="688"/>
    </location>
</feature>
<feature type="modified residue" description="Phosphoserine" evidence="20 23 24 26">
    <location>
        <position position="792"/>
    </location>
</feature>
<feature type="modified residue" description="Phosphoserine" evidence="18 20 23 26">
    <location>
        <position position="927"/>
    </location>
</feature>
<feature type="cross-link" description="Glycyl lysine isopeptide (Lys-Gly) (interchain with G-Cter in SUMO1)" evidence="27">
    <location>
        <position position="254"/>
    </location>
</feature>
<feature type="splice variant" id="VSP_017617" description="In isoform 2." evidence="14 15">
    <location>
        <begin position="508"/>
        <end position="544"/>
    </location>
</feature>
<feature type="sequence variant" id="VAR_025661" description="In dbSNP:rs3735400.">
    <original>S</original>
    <variation>W</variation>
    <location>
        <position position="65"/>
    </location>
</feature>
<feature type="sequence variant" id="VAR_025662" description="In dbSNP:rs197367." evidence="5 17">
    <original>R</original>
    <variation>K</variation>
    <location>
        <position position="185"/>
    </location>
</feature>
<feature type="sequence variant" id="VAR_072418" description="In FSGS8; results in decreased interaction with CD2AP; dbSNP:rs587777741." evidence="13">
    <original>R</original>
    <variation>C</variation>
    <location>
        <position position="431"/>
    </location>
</feature>
<feature type="sequence variant" id="VAR_072419" description="In FSGS8; dbSNP:rs1184529372." evidence="13">
    <original>G</original>
    <variation>C</variation>
    <location>
        <position position="618"/>
    </location>
</feature>
<feature type="mutagenesis site" description="Abrogates interaction with CD2AP." evidence="8">
    <original>R</original>
    <variation>A</variation>
    <location>
        <position position="32"/>
    </location>
</feature>
<feature type="mutagenesis site" description="Abrogates ubiquitin-mediated proteolysis; when associated with A-44." evidence="9">
    <original>R</original>
    <variation>A</variation>
    <location>
        <position position="41"/>
    </location>
</feature>
<feature type="mutagenesis site" description="Abrogates ubiquitin-mediated proteolysis; when associated with A-41." evidence="9">
    <original>L</original>
    <variation>A</variation>
    <location>
        <position position="44"/>
    </location>
</feature>
<feature type="sequence conflict" description="In Ref. 1; AAF75796." evidence="16" ref="1">
    <original>L</original>
    <variation>F</variation>
    <location>
        <position position="53"/>
    </location>
</feature>
<feature type="sequence conflict" description="In Ref. 1; AAF75796." evidence="16" ref="1">
    <original>T</original>
    <variation>S</variation>
    <location>
        <position position="62"/>
    </location>
</feature>
<feature type="sequence conflict" description="In Ref. 1 and 3." evidence="16" ref="1 3">
    <original>T</original>
    <variation>TS</variation>
    <location>
        <position position="294"/>
    </location>
</feature>
<feature type="sequence conflict" description="In Ref. 2; AAH70066." evidence="16" ref="2">
    <original>R</original>
    <variation>K</variation>
    <location>
        <position position="410"/>
    </location>
</feature>
<feature type="sequence conflict" description="In Ref. 4; BAA91711." evidence="16" ref="4">
    <original>L</original>
    <variation>S</variation>
    <location>
        <position position="625"/>
    </location>
</feature>
<feature type="sequence conflict" description="In Ref. 3; CAI56788." evidence="16" ref="3">
    <original>A</original>
    <variation>V</variation>
    <location>
        <position position="1035"/>
    </location>
</feature>
<feature type="helix" evidence="29">
    <location>
        <begin position="716"/>
        <end position="742"/>
    </location>
</feature>
<feature type="helix" evidence="29">
    <location>
        <begin position="747"/>
        <end position="749"/>
    </location>
</feature>
<feature type="turn" evidence="29">
    <location>
        <begin position="750"/>
        <end position="752"/>
    </location>
</feature>
<feature type="helix" evidence="29">
    <location>
        <begin position="754"/>
        <end position="781"/>
    </location>
</feature>
<feature type="strand" evidence="29">
    <location>
        <begin position="802"/>
        <end position="813"/>
    </location>
</feature>
<feature type="helix" evidence="29">
    <location>
        <begin position="815"/>
        <end position="823"/>
    </location>
</feature>
<feature type="strand" evidence="29">
    <location>
        <begin position="827"/>
        <end position="845"/>
    </location>
</feature>
<feature type="turn" evidence="29">
    <location>
        <begin position="851"/>
        <end position="853"/>
    </location>
</feature>
<feature type="strand" evidence="29">
    <location>
        <begin position="854"/>
        <end position="856"/>
    </location>
</feature>
<feature type="strand" evidence="29">
    <location>
        <begin position="859"/>
        <end position="861"/>
    </location>
</feature>
<feature type="strand" evidence="29">
    <location>
        <begin position="866"/>
        <end position="871"/>
    </location>
</feature>
<feature type="strand" evidence="29">
    <location>
        <begin position="877"/>
        <end position="887"/>
    </location>
</feature>
<feature type="strand" evidence="29">
    <location>
        <begin position="940"/>
        <end position="947"/>
    </location>
</feature>
<feature type="helix" evidence="29">
    <location>
        <begin position="949"/>
        <end position="951"/>
    </location>
</feature>
<feature type="strand" evidence="29">
    <location>
        <begin position="956"/>
        <end position="958"/>
    </location>
</feature>
<feature type="strand" evidence="29">
    <location>
        <begin position="970"/>
        <end position="979"/>
    </location>
</feature>
<feature type="strand" evidence="28">
    <location>
        <begin position="986"/>
        <end position="996"/>
    </location>
</feature>
<feature type="strand" evidence="28">
    <location>
        <begin position="999"/>
        <end position="1010"/>
    </location>
</feature>
<feature type="strand" evidence="28">
    <location>
        <begin position="1013"/>
        <end position="1019"/>
    </location>
</feature>
<feature type="helix" evidence="28">
    <location>
        <begin position="1020"/>
        <end position="1023"/>
    </location>
</feature>
<feature type="strand" evidence="28">
    <location>
        <begin position="1029"/>
        <end position="1033"/>
    </location>
</feature>
<feature type="helix" evidence="28">
    <location>
        <begin position="1034"/>
        <end position="1036"/>
    </location>
</feature>
<feature type="strand" evidence="28">
    <location>
        <begin position="1039"/>
        <end position="1041"/>
    </location>
</feature>
<feature type="turn" evidence="28">
    <location>
        <begin position="1047"/>
        <end position="1049"/>
    </location>
</feature>
<feature type="strand" evidence="28">
    <location>
        <begin position="1055"/>
        <end position="1063"/>
    </location>
</feature>
<feature type="strand" evidence="28">
    <location>
        <begin position="1072"/>
        <end position="1077"/>
    </location>
</feature>
<feature type="strand" evidence="28">
    <location>
        <begin position="1080"/>
        <end position="1088"/>
    </location>
</feature>
<feature type="helix" evidence="28">
    <location>
        <begin position="1092"/>
        <end position="1110"/>
    </location>
</feature>